<accession>Q5TAP6</accession>
<accession>Q5FWG3</accession>
<accession>Q92555</accession>
<protein>
    <recommendedName>
        <fullName>U3 small nucleolar RNA-associated protein 14 homolog C</fullName>
    </recommendedName>
</protein>
<reference key="1">
    <citation type="journal article" date="1996" name="DNA Res.">
        <title>Prediction of the coding sequences of unidentified human genes. VI. The coding sequences of 80 new genes (KIAA0201-KIAA0280) deduced by analysis of cDNA clones from cell line KG-1 and brain.</title>
        <authorList>
            <person name="Nagase T."/>
            <person name="Seki N."/>
            <person name="Ishikawa K."/>
            <person name="Ohira M."/>
            <person name="Kawarabayasi Y."/>
            <person name="Ohara O."/>
            <person name="Tanaka A."/>
            <person name="Kotani H."/>
            <person name="Miyajima N."/>
            <person name="Nomura N."/>
        </authorList>
    </citation>
    <scope>NUCLEOTIDE SEQUENCE [LARGE SCALE MRNA]</scope>
    <source>
        <tissue>Bone marrow</tissue>
    </source>
</reference>
<reference key="2">
    <citation type="journal article" date="2004" name="Nature">
        <title>The DNA sequence and analysis of human chromosome 13.</title>
        <authorList>
            <person name="Dunham A."/>
            <person name="Matthews L.H."/>
            <person name="Burton J."/>
            <person name="Ashurst J.L."/>
            <person name="Howe K.L."/>
            <person name="Ashcroft K.J."/>
            <person name="Beare D.M."/>
            <person name="Burford D.C."/>
            <person name="Hunt S.E."/>
            <person name="Griffiths-Jones S."/>
            <person name="Jones M.C."/>
            <person name="Keenan S.J."/>
            <person name="Oliver K."/>
            <person name="Scott C.E."/>
            <person name="Ainscough R."/>
            <person name="Almeida J.P."/>
            <person name="Ambrose K.D."/>
            <person name="Andrews D.T."/>
            <person name="Ashwell R.I.S."/>
            <person name="Babbage A.K."/>
            <person name="Bagguley C.L."/>
            <person name="Bailey J."/>
            <person name="Bannerjee R."/>
            <person name="Barlow K.F."/>
            <person name="Bates K."/>
            <person name="Beasley H."/>
            <person name="Bird C.P."/>
            <person name="Bray-Allen S."/>
            <person name="Brown A.J."/>
            <person name="Brown J.Y."/>
            <person name="Burrill W."/>
            <person name="Carder C."/>
            <person name="Carter N.P."/>
            <person name="Chapman J.C."/>
            <person name="Clamp M.E."/>
            <person name="Clark S.Y."/>
            <person name="Clarke G."/>
            <person name="Clee C.M."/>
            <person name="Clegg S.C."/>
            <person name="Cobley V."/>
            <person name="Collins J.E."/>
            <person name="Corby N."/>
            <person name="Coville G.J."/>
            <person name="Deloukas P."/>
            <person name="Dhami P."/>
            <person name="Dunham I."/>
            <person name="Dunn M."/>
            <person name="Earthrowl M.E."/>
            <person name="Ellington A.G."/>
            <person name="Faulkner L."/>
            <person name="Frankish A.G."/>
            <person name="Frankland J."/>
            <person name="French L."/>
            <person name="Garner P."/>
            <person name="Garnett J."/>
            <person name="Gilbert J.G.R."/>
            <person name="Gilson C.J."/>
            <person name="Ghori J."/>
            <person name="Grafham D.V."/>
            <person name="Gribble S.M."/>
            <person name="Griffiths C."/>
            <person name="Hall R.E."/>
            <person name="Hammond S."/>
            <person name="Harley J.L."/>
            <person name="Hart E.A."/>
            <person name="Heath P.D."/>
            <person name="Howden P.J."/>
            <person name="Huckle E.J."/>
            <person name="Hunt P.J."/>
            <person name="Hunt A.R."/>
            <person name="Johnson C."/>
            <person name="Johnson D."/>
            <person name="Kay M."/>
            <person name="Kimberley A.M."/>
            <person name="King A."/>
            <person name="Laird G.K."/>
            <person name="Langford C.J."/>
            <person name="Lawlor S."/>
            <person name="Leongamornlert D.A."/>
            <person name="Lloyd D.M."/>
            <person name="Lloyd C."/>
            <person name="Loveland J.E."/>
            <person name="Lovell J."/>
            <person name="Martin S."/>
            <person name="Mashreghi-Mohammadi M."/>
            <person name="McLaren S.J."/>
            <person name="McMurray A."/>
            <person name="Milne S."/>
            <person name="Moore M.J.F."/>
            <person name="Nickerson T."/>
            <person name="Palmer S.A."/>
            <person name="Pearce A.V."/>
            <person name="Peck A.I."/>
            <person name="Pelan S."/>
            <person name="Phillimore B."/>
            <person name="Porter K.M."/>
            <person name="Rice C.M."/>
            <person name="Searle S."/>
            <person name="Sehra H.K."/>
            <person name="Shownkeen R."/>
            <person name="Skuce C.D."/>
            <person name="Smith M."/>
            <person name="Steward C.A."/>
            <person name="Sycamore N."/>
            <person name="Tester J."/>
            <person name="Thomas D.W."/>
            <person name="Tracey A."/>
            <person name="Tromans A."/>
            <person name="Tubby B."/>
            <person name="Wall M."/>
            <person name="Wallis J.M."/>
            <person name="West A.P."/>
            <person name="Whitehead S.L."/>
            <person name="Willey D.L."/>
            <person name="Wilming L."/>
            <person name="Wray P.W."/>
            <person name="Wright M.W."/>
            <person name="Young L."/>
            <person name="Coulson A."/>
            <person name="Durbin R.M."/>
            <person name="Hubbard T."/>
            <person name="Sulston J.E."/>
            <person name="Beck S."/>
            <person name="Bentley D.R."/>
            <person name="Rogers J."/>
            <person name="Ross M.T."/>
        </authorList>
    </citation>
    <scope>NUCLEOTIDE SEQUENCE [LARGE SCALE GENOMIC DNA]</scope>
</reference>
<reference key="3">
    <citation type="journal article" date="2004" name="Genome Res.">
        <title>The status, quality, and expansion of the NIH full-length cDNA project: the Mammalian Gene Collection (MGC).</title>
        <authorList>
            <consortium name="The MGC Project Team"/>
        </authorList>
    </citation>
    <scope>NUCLEOTIDE SEQUENCE [LARGE SCALE MRNA]</scope>
    <scope>VARIANT VAL-85</scope>
    <source>
        <tissue>Lymph</tissue>
    </source>
</reference>
<reference key="4">
    <citation type="journal article" date="2004" name="Proc. Natl. Acad. Sci. U.S.A.">
        <title>The mouse juvenile spermatogonial depletion (jsd) phenotype is due to a mutation in the X-derived retrogene, mUtp14b.</title>
        <authorList>
            <person name="Rohozinski J."/>
            <person name="Bishop C.E."/>
        </authorList>
    </citation>
    <scope>TISSUE SPECIFICITY</scope>
    <scope>FUNCTION</scope>
</reference>
<reference key="5">
    <citation type="journal article" date="2009" name="Anal. Chem.">
        <title>Lys-N and trypsin cover complementary parts of the phosphoproteome in a refined SCX-based approach.</title>
        <authorList>
            <person name="Gauci S."/>
            <person name="Helbig A.O."/>
            <person name="Slijper M."/>
            <person name="Krijgsveld J."/>
            <person name="Heck A.J."/>
            <person name="Mohammed S."/>
        </authorList>
    </citation>
    <scope>IDENTIFICATION BY MASS SPECTROMETRY [LARGE SCALE ANALYSIS]</scope>
</reference>
<organism>
    <name type="scientific">Homo sapiens</name>
    <name type="common">Human</name>
    <dbReference type="NCBI Taxonomy" id="9606"/>
    <lineage>
        <taxon>Eukaryota</taxon>
        <taxon>Metazoa</taxon>
        <taxon>Chordata</taxon>
        <taxon>Craniata</taxon>
        <taxon>Vertebrata</taxon>
        <taxon>Euteleostomi</taxon>
        <taxon>Mammalia</taxon>
        <taxon>Eutheria</taxon>
        <taxon>Euarchontoglires</taxon>
        <taxon>Primates</taxon>
        <taxon>Haplorrhini</taxon>
        <taxon>Catarrhini</taxon>
        <taxon>Hominidae</taxon>
        <taxon>Homo</taxon>
    </lineage>
</organism>
<keyword id="KW-0175">Coiled coil</keyword>
<keyword id="KW-0217">Developmental protein</keyword>
<keyword id="KW-0221">Differentiation</keyword>
<keyword id="KW-1017">Isopeptide bond</keyword>
<keyword id="KW-0469">Meiosis</keyword>
<keyword id="KW-0539">Nucleus</keyword>
<keyword id="KW-0597">Phosphoprotein</keyword>
<keyword id="KW-1267">Proteomics identification</keyword>
<keyword id="KW-1185">Reference proteome</keyword>
<keyword id="KW-0690">Ribosome biogenesis</keyword>
<keyword id="KW-0744">Spermatogenesis</keyword>
<keyword id="KW-0832">Ubl conjugation</keyword>
<comment type="function">
    <text evidence="1 5">Essential for spermatogenesis. May be required specifically for ribosome biogenesis and hence protein synthesis during male meiosis (By similarity).</text>
</comment>
<comment type="interaction">
    <interactant intactId="EBI-11737646">
        <id>Q5TAP6</id>
    </interactant>
    <interactant intactId="EBI-3905054">
        <id>P13196</id>
        <label>ALAS1</label>
    </interactant>
    <organismsDiffer>false</organismsDiffer>
    <experiments>3</experiments>
</comment>
<comment type="interaction">
    <interactant intactId="EBI-11737646">
        <id>Q5TAP6</id>
    </interactant>
    <interactant intactId="EBI-11975051">
        <id>Q8TD16-2</id>
        <label>BICD2</label>
    </interactant>
    <organismsDiffer>false</organismsDiffer>
    <experiments>3</experiments>
</comment>
<comment type="interaction">
    <interactant intactId="EBI-11737646">
        <id>Q5TAP6</id>
    </interactant>
    <interactant intactId="EBI-3866279">
        <id>Q9BWT7</id>
        <label>CARD10</label>
    </interactant>
    <organismsDiffer>false</organismsDiffer>
    <experiments>3</experiments>
</comment>
<comment type="interaction">
    <interactant intactId="EBI-11737646">
        <id>Q5TAP6</id>
    </interactant>
    <interactant intactId="EBI-739624">
        <id>Q8NHQ1</id>
        <label>CEP70</label>
    </interactant>
    <organismsDiffer>false</organismsDiffer>
    <experiments>3</experiments>
</comment>
<comment type="interaction">
    <interactant intactId="EBI-11737646">
        <id>Q5TAP6</id>
    </interactant>
    <interactant intactId="EBI-746252">
        <id>Q96CN9</id>
        <label>GCC1</label>
    </interactant>
    <organismsDiffer>false</organismsDiffer>
    <experiments>3</experiments>
</comment>
<comment type="interaction">
    <interactant intactId="EBI-11737646">
        <id>Q5TAP6</id>
    </interactant>
    <interactant intactId="EBI-618309">
        <id>Q08379</id>
        <label>GOLGA2</label>
    </interactant>
    <organismsDiffer>false</organismsDiffer>
    <experiments>5</experiments>
</comment>
<comment type="interaction">
    <interactant intactId="EBI-11737646">
        <id>Q5TAP6</id>
    </interactant>
    <interactant intactId="EBI-11163335">
        <id>Q9NYA3</id>
        <label>GOLGA6A</label>
    </interactant>
    <organismsDiffer>false</organismsDiffer>
    <experiments>3</experiments>
</comment>
<comment type="interaction">
    <interactant intactId="EBI-11737646">
        <id>Q5TAP6</id>
    </interactant>
    <interactant intactId="EBI-746704">
        <id>Q9UJC3</id>
        <label>HOOK1</label>
    </interactant>
    <organismsDiffer>false</organismsDiffer>
    <experiments>3</experiments>
</comment>
<comment type="interaction">
    <interactant intactId="EBI-11737646">
        <id>Q5TAP6</id>
    </interactant>
    <interactant intactId="EBI-10961706">
        <id>Q96ED9-2</id>
        <label>HOOK2</label>
    </interactant>
    <organismsDiffer>false</organismsDiffer>
    <experiments>3</experiments>
</comment>
<comment type="interaction">
    <interactant intactId="EBI-11737646">
        <id>Q5TAP6</id>
    </interactant>
    <interactant intactId="EBI-17181882">
        <id>O75564-2</id>
        <label>JRK</label>
    </interactant>
    <organismsDiffer>false</organismsDiffer>
    <experiments>3</experiments>
</comment>
<comment type="interaction">
    <interactant intactId="EBI-11737646">
        <id>Q5TAP6</id>
    </interactant>
    <interactant intactId="EBI-2556193">
        <id>Q63ZY3</id>
        <label>KANK2</label>
    </interactant>
    <organismsDiffer>false</organismsDiffer>
    <experiments>3</experiments>
</comment>
<comment type="interaction">
    <interactant intactId="EBI-11737646">
        <id>Q5TAP6</id>
    </interactant>
    <interactant intactId="EBI-1047093">
        <id>O76011</id>
        <label>KRT34</label>
    </interactant>
    <organismsDiffer>false</organismsDiffer>
    <experiments>3</experiments>
</comment>
<comment type="interaction">
    <interactant intactId="EBI-11737646">
        <id>Q5TAP6</id>
    </interactant>
    <interactant intactId="EBI-307531">
        <id>P23508</id>
        <label>MCC</label>
    </interactant>
    <organismsDiffer>false</organismsDiffer>
    <experiments>3</experiments>
</comment>
<comment type="interaction">
    <interactant intactId="EBI-11737646">
        <id>Q5TAP6</id>
    </interactant>
    <interactant intactId="EBI-16439278">
        <id>Q6FHY5</id>
        <label>MEOX2</label>
    </interactant>
    <organismsDiffer>false</organismsDiffer>
    <experiments>3</experiments>
</comment>
<comment type="interaction">
    <interactant intactId="EBI-11737646">
        <id>Q5TAP6</id>
    </interactant>
    <interactant intactId="EBI-11522433">
        <id>Q5JR59-3</id>
        <label>MTUS2</label>
    </interactant>
    <organismsDiffer>false</organismsDiffer>
    <experiments>3</experiments>
</comment>
<comment type="interaction">
    <interactant intactId="EBI-11737646">
        <id>Q5TAP6</id>
    </interactant>
    <interactant intactId="EBI-8641936">
        <id>Q15742</id>
        <label>NAB2</label>
    </interactant>
    <organismsDiffer>false</organismsDiffer>
    <experiments>3</experiments>
</comment>
<comment type="interaction">
    <interactant intactId="EBI-11737646">
        <id>Q5TAP6</id>
    </interactant>
    <interactant intactId="EBI-14066006">
        <id>Q4G0R1</id>
        <label>PIBF1</label>
    </interactant>
    <organismsDiffer>false</organismsDiffer>
    <experiments>3</experiments>
</comment>
<comment type="interaction">
    <interactant intactId="EBI-11737646">
        <id>Q5TAP6</id>
    </interactant>
    <interactant intactId="EBI-447043">
        <id>Q15276</id>
        <label>RABEP1</label>
    </interactant>
    <organismsDiffer>false</organismsDiffer>
    <experiments>3</experiments>
</comment>
<comment type="interaction">
    <interactant intactId="EBI-11737646">
        <id>Q5TAP6</id>
    </interactant>
    <interactant intactId="EBI-726876">
        <id>Q6NUQ1</id>
        <label>RINT1</label>
    </interactant>
    <organismsDiffer>false</organismsDiffer>
    <experiments>3</experiments>
</comment>
<comment type="interaction">
    <interactant intactId="EBI-11737646">
        <id>Q5TAP6</id>
    </interactant>
    <interactant intactId="EBI-11523345">
        <id>Q8IYF3-3</id>
        <label>TEX11</label>
    </interactant>
    <organismsDiffer>false</organismsDiffer>
    <experiments>3</experiments>
</comment>
<comment type="interaction">
    <interactant intactId="EBI-11737646">
        <id>Q5TAP6</id>
    </interactant>
    <interactant intactId="EBI-359224">
        <id>Q13077</id>
        <label>TRAF1</label>
    </interactant>
    <organismsDiffer>false</organismsDiffer>
    <experiments>3</experiments>
</comment>
<comment type="interaction">
    <interactant intactId="EBI-11737646">
        <id>Q5TAP6</id>
    </interactant>
    <interactant intactId="EBI-355744">
        <id>Q12933</id>
        <label>TRAF2</label>
    </interactant>
    <organismsDiffer>false</organismsDiffer>
    <experiments>3</experiments>
</comment>
<comment type="interaction">
    <interactant intactId="EBI-11737646">
        <id>Q5TAP6</id>
    </interactant>
    <interactant intactId="EBI-719493">
        <id>P14373</id>
        <label>TRIM27</label>
    </interactant>
    <organismsDiffer>false</organismsDiffer>
    <experiments>3</experiments>
</comment>
<comment type="interaction">
    <interactant intactId="EBI-11737646">
        <id>Q5TAP6</id>
    </interactant>
    <interactant intactId="EBI-359793">
        <id>P40222</id>
        <label>TXLNA</label>
    </interactant>
    <organismsDiffer>false</organismsDiffer>
    <experiments>3</experiments>
</comment>
<comment type="subcellular location">
    <subcellularLocation>
        <location evidence="1">Nucleus</location>
        <location evidence="1">Nucleolus</location>
    </subcellularLocation>
</comment>
<comment type="tissue specificity">
    <text evidence="5">Expressed in testis.</text>
</comment>
<comment type="miscellaneous">
    <text>Encoded by an autosomal retrotransposed copy of the X-linked gene UTP14A. Evolution of autosomal retrogenes from X-linked progenitors compensates for X-chromosome silencing during male meiosis.</text>
</comment>
<comment type="similarity">
    <text evidence="7">Belongs to the UTP14 family.</text>
</comment>
<comment type="sequence caution" evidence="7">
    <conflict type="erroneous initiation">
        <sequence resource="EMBL-CDS" id="BAA13396"/>
    </conflict>
</comment>
<name>UT14C_HUMAN</name>
<sequence>MNVNQVAENLALSHQEELVDLPKNYPLSENEDEGDSDGERKHQKLLEAIISLDGKNRRKLAERSEASLKVSEFSVSSEGSGEKLGLADLLEPVKTSSSLATVKKQLNRVKSKKVVELPLNKEKIEQIHREVAFSKTSQVLSKWDPIILKNQQAEQLVFPLGKEQPAIAPIEHALSGWKARTPLEQEIFNLLHKNKQPVTDPLLTPMEKASLQAMSLEEAKMHRAELQRARALQSYYEAKARKEKKIKSKKYHKVVKKGKAKKALKEFEQLQKVNPTVALEEMEKIENARMMERMSLKHQNSGKWAKSKAIMAKYDLEARQAMQEQLAKNKELTQKLQVASESEEEEGGTEVEELLVPHVANEVQMNVDGPNPWMFRSCTSDTKEAATQEDPEQVPELAAHEVSASEAEERPVAEEEILLREFEERQSLRKRSELNQDAEPASSQETKDSSSQEVLSELRALSQKLKEKHQSRKQKASSEGTVPQVQREEPAPEEAEPLLLQRSERVQTLEELEELGKEDCFQNKELPRPVLEGQQSERTPNNRPDAPKEKKEKEQLINLQNFLTTQSPSVRSLAVPTIIEELEDEEERDQRQMIKEAFAGDDVIRDFLKEKREAVEASKPKDVDLTLPGWGEWGGVGLKPSAKKRRQFLIKAPEGPPRKDKNLPNVIISEKRNIHAAAHQVQVLPYPFTHHRQFERTIQTPIGSTWNTQRAFQKLTTPKVVTKPGHIIKPIKAEDVGYQSSSRSDLPVIQRNPKRITTRHNKEEKL</sequence>
<feature type="chain" id="PRO_0000065736" description="U3 small nucleolar RNA-associated protein 14 homolog C">
    <location>
        <begin position="1"/>
        <end position="766"/>
    </location>
</feature>
<feature type="region of interest" description="Disordered" evidence="4">
    <location>
        <begin position="14"/>
        <end position="42"/>
    </location>
</feature>
<feature type="region of interest" description="Disordered" evidence="4">
    <location>
        <begin position="365"/>
        <end position="563"/>
    </location>
</feature>
<feature type="region of interest" description="Disordered" evidence="4">
    <location>
        <begin position="734"/>
        <end position="766"/>
    </location>
</feature>
<feature type="coiled-coil region" evidence="3">
    <location>
        <begin position="216"/>
        <end position="245"/>
    </location>
</feature>
<feature type="coiled-coil region" evidence="3">
    <location>
        <begin position="316"/>
        <end position="346"/>
    </location>
</feature>
<feature type="coiled-coil region" evidence="3">
    <location>
        <begin position="452"/>
        <end position="470"/>
    </location>
</feature>
<feature type="compositionally biased region" description="Low complexity" evidence="4">
    <location>
        <begin position="396"/>
        <end position="405"/>
    </location>
</feature>
<feature type="compositionally biased region" description="Basic and acidic residues" evidence="4">
    <location>
        <begin position="407"/>
        <end position="434"/>
    </location>
</feature>
<feature type="compositionally biased region" description="Basic residues" evidence="4">
    <location>
        <begin position="466"/>
        <end position="475"/>
    </location>
</feature>
<feature type="compositionally biased region" description="Basic and acidic residues" evidence="4">
    <location>
        <begin position="502"/>
        <end position="527"/>
    </location>
</feature>
<feature type="compositionally biased region" description="Polar residues" evidence="4">
    <location>
        <begin position="533"/>
        <end position="542"/>
    </location>
</feature>
<feature type="compositionally biased region" description="Basic and acidic residues" evidence="4">
    <location>
        <begin position="545"/>
        <end position="555"/>
    </location>
</feature>
<feature type="modified residue" description="Phosphoserine" evidence="2">
    <location>
        <position position="28"/>
    </location>
</feature>
<feature type="modified residue" description="Phosphoserine" evidence="2">
    <location>
        <position position="51"/>
    </location>
</feature>
<feature type="modified residue" description="Phosphoserine" evidence="2">
    <location>
        <position position="76"/>
    </location>
</feature>
<feature type="modified residue" description="Phosphoserine" evidence="2">
    <location>
        <position position="80"/>
    </location>
</feature>
<feature type="modified residue" description="Phosphothreonine" evidence="2">
    <location>
        <position position="204"/>
    </location>
</feature>
<feature type="modified residue" description="Phosphoserine" evidence="2">
    <location>
        <position position="403"/>
    </location>
</feature>
<feature type="modified residue" description="Phosphoserine" evidence="2">
    <location>
        <position position="405"/>
    </location>
</feature>
<feature type="modified residue" description="Phosphoserine" evidence="2">
    <location>
        <position position="443"/>
    </location>
</feature>
<feature type="modified residue" description="Phosphoserine" evidence="2">
    <location>
        <position position="451"/>
    </location>
</feature>
<feature type="modified residue" description="Phosphoserine" evidence="2">
    <location>
        <position position="567"/>
    </location>
</feature>
<feature type="cross-link" description="Glycyl lysine isopeptide (Lys-Gly) (interchain with G-Cter in SUMO2)" evidence="2">
    <location>
        <position position="121"/>
    </location>
</feature>
<feature type="cross-link" description="Glycyl lysine isopeptide (Lys-Gly) (interchain with G-Cter in SUMO2)" evidence="2">
    <location>
        <position position="447"/>
    </location>
</feature>
<feature type="cross-link" description="Glycyl lysine isopeptide (Lys-Gly) (interchain with G-Cter in SUMO2)" evidence="2">
    <location>
        <position position="517"/>
    </location>
</feature>
<feature type="cross-link" description="Glycyl lysine isopeptide (Lys-Gly) (interchain with G-Cter in SUMO2)" evidence="2">
    <location>
        <position position="732"/>
    </location>
</feature>
<feature type="sequence variant" id="VAR_022812" description="In dbSNP:rs3742289." evidence="6">
    <original>G</original>
    <variation>V</variation>
    <location>
        <position position="85"/>
    </location>
</feature>
<feature type="sequence variant" id="VAR_022813" description="In dbSNP:rs3742290.">
    <original>T</original>
    <variation>A</variation>
    <location>
        <position position="101"/>
    </location>
</feature>
<feature type="sequence variant" id="VAR_051482" description="In dbSNP:rs17402034.">
    <original>R</original>
    <variation>H</variation>
    <location>
        <position position="319"/>
    </location>
</feature>
<proteinExistence type="evidence at protein level"/>
<evidence type="ECO:0000250" key="1"/>
<evidence type="ECO:0000250" key="2">
    <source>
        <dbReference type="UniProtKB" id="Q9BVJ6"/>
    </source>
</evidence>
<evidence type="ECO:0000255" key="3"/>
<evidence type="ECO:0000256" key="4">
    <source>
        <dbReference type="SAM" id="MobiDB-lite"/>
    </source>
</evidence>
<evidence type="ECO:0000269" key="5">
    <source>
    </source>
</evidence>
<evidence type="ECO:0000269" key="6">
    <source>
    </source>
</evidence>
<evidence type="ECO:0000305" key="7"/>
<dbReference type="EMBL" id="D87455">
    <property type="protein sequence ID" value="BAA13396.2"/>
    <property type="status" value="ALT_INIT"/>
    <property type="molecule type" value="mRNA"/>
</dbReference>
<dbReference type="EMBL" id="AL139082">
    <property type="status" value="NOT_ANNOTATED_CDS"/>
    <property type="molecule type" value="Genomic_DNA"/>
</dbReference>
<dbReference type="EMBL" id="BC089407">
    <property type="protein sequence ID" value="AAH89407.1"/>
    <property type="molecule type" value="mRNA"/>
</dbReference>
<dbReference type="CCDS" id="CCDS31978.1"/>
<dbReference type="RefSeq" id="NP_067677.4">
    <property type="nucleotide sequence ID" value="NM_021645.5"/>
</dbReference>
<dbReference type="SMR" id="Q5TAP6"/>
<dbReference type="BioGRID" id="115073">
    <property type="interactions" value="52"/>
</dbReference>
<dbReference type="FunCoup" id="Q5TAP6">
    <property type="interactions" value="677"/>
</dbReference>
<dbReference type="IntAct" id="Q5TAP6">
    <property type="interactions" value="35"/>
</dbReference>
<dbReference type="MINT" id="Q5TAP6"/>
<dbReference type="STRING" id="9606.ENSP00000428619"/>
<dbReference type="GlyGen" id="Q5TAP6">
    <property type="glycosylation" value="3 sites, 1 O-linked glycan (3 sites)"/>
</dbReference>
<dbReference type="iPTMnet" id="Q5TAP6"/>
<dbReference type="PhosphoSitePlus" id="Q5TAP6"/>
<dbReference type="BioMuta" id="UTP14C"/>
<dbReference type="DMDM" id="68566167"/>
<dbReference type="jPOST" id="Q5TAP6"/>
<dbReference type="MassIVE" id="Q5TAP6"/>
<dbReference type="PaxDb" id="9606-ENSP00000428619"/>
<dbReference type="PeptideAtlas" id="Q5TAP6"/>
<dbReference type="ProteomicsDB" id="64855"/>
<dbReference type="Antibodypedia" id="49851">
    <property type="antibodies" value="19 antibodies from 11 providers"/>
</dbReference>
<dbReference type="DNASU" id="9724"/>
<dbReference type="Ensembl" id="ENST00000521776.2">
    <property type="protein sequence ID" value="ENSP00000428619.1"/>
    <property type="gene ID" value="ENSG00000253797.2"/>
</dbReference>
<dbReference type="GeneID" id="9724"/>
<dbReference type="KEGG" id="hsa:9724"/>
<dbReference type="MANE-Select" id="ENST00000521776.2">
    <property type="protein sequence ID" value="ENSP00000428619.1"/>
    <property type="RefSeq nucleotide sequence ID" value="NM_021645.6"/>
    <property type="RefSeq protein sequence ID" value="NP_067677.4"/>
</dbReference>
<dbReference type="UCSC" id="uc058xgb.1">
    <property type="organism name" value="human"/>
</dbReference>
<dbReference type="AGR" id="HGNC:20321"/>
<dbReference type="CTD" id="9724"/>
<dbReference type="DisGeNET" id="9724"/>
<dbReference type="GeneCards" id="UTP14C"/>
<dbReference type="HGNC" id="HGNC:20321">
    <property type="gene designation" value="UTP14C"/>
</dbReference>
<dbReference type="HPA" id="ENSG00000253797">
    <property type="expression patterns" value="Low tissue specificity"/>
</dbReference>
<dbReference type="MalaCards" id="UTP14C"/>
<dbReference type="MIM" id="608969">
    <property type="type" value="gene"/>
</dbReference>
<dbReference type="neXtProt" id="NX_Q5TAP6"/>
<dbReference type="OpenTargets" id="ENSG00000253797"/>
<dbReference type="PharmGKB" id="PA134944828"/>
<dbReference type="VEuPathDB" id="HostDB:ENSG00000253797"/>
<dbReference type="eggNOG" id="KOG2172">
    <property type="taxonomic scope" value="Eukaryota"/>
</dbReference>
<dbReference type="GeneTree" id="ENSGT00390000008142"/>
<dbReference type="HOGENOM" id="CLU_012635_1_0_1"/>
<dbReference type="InParanoid" id="Q5TAP6"/>
<dbReference type="OMA" id="EHALSGW"/>
<dbReference type="OrthoDB" id="277439at2759"/>
<dbReference type="PAN-GO" id="Q5TAP6">
    <property type="GO annotations" value="2 GO annotations based on evolutionary models"/>
</dbReference>
<dbReference type="PhylomeDB" id="Q5TAP6"/>
<dbReference type="TreeFam" id="TF314531"/>
<dbReference type="PathwayCommons" id="Q5TAP6"/>
<dbReference type="Reactome" id="R-HSA-6790901">
    <property type="pathway name" value="rRNA modification in the nucleus and cytosol"/>
</dbReference>
<dbReference type="Reactome" id="R-HSA-6791226">
    <property type="pathway name" value="Major pathway of rRNA processing in the nucleolus and cytosol"/>
</dbReference>
<dbReference type="SignaLink" id="Q5TAP6"/>
<dbReference type="BioGRID-ORCS" id="9724">
    <property type="hits" value="7 hits in 1145 CRISPR screens"/>
</dbReference>
<dbReference type="CD-CODE" id="91857CE7">
    <property type="entry name" value="Nucleolus"/>
</dbReference>
<dbReference type="ChiTaRS" id="UTP14C">
    <property type="organism name" value="human"/>
</dbReference>
<dbReference type="GenomeRNAi" id="9724"/>
<dbReference type="Pharos" id="Q5TAP6">
    <property type="development level" value="Tdark"/>
</dbReference>
<dbReference type="PRO" id="PR:Q5TAP6"/>
<dbReference type="Proteomes" id="UP000005640">
    <property type="component" value="Chromosome 13"/>
</dbReference>
<dbReference type="RNAct" id="Q5TAP6">
    <property type="molecule type" value="protein"/>
</dbReference>
<dbReference type="Bgee" id="ENSG00000253797">
    <property type="expression patterns" value="Expressed in primordial germ cell in gonad and 90 other cell types or tissues"/>
</dbReference>
<dbReference type="ExpressionAtlas" id="Q5TAP6">
    <property type="expression patterns" value="baseline and differential"/>
</dbReference>
<dbReference type="GO" id="GO:0005829">
    <property type="term" value="C:cytosol"/>
    <property type="evidence" value="ECO:0000314"/>
    <property type="project" value="HPA"/>
</dbReference>
<dbReference type="GO" id="GO:0005730">
    <property type="term" value="C:nucleolus"/>
    <property type="evidence" value="ECO:0000314"/>
    <property type="project" value="HPA"/>
</dbReference>
<dbReference type="GO" id="GO:0032040">
    <property type="term" value="C:small-subunit processome"/>
    <property type="evidence" value="ECO:0000318"/>
    <property type="project" value="GO_Central"/>
</dbReference>
<dbReference type="GO" id="GO:0030154">
    <property type="term" value="P:cell differentiation"/>
    <property type="evidence" value="ECO:0007669"/>
    <property type="project" value="UniProtKB-KW"/>
</dbReference>
<dbReference type="GO" id="GO:0051321">
    <property type="term" value="P:meiotic cell cycle"/>
    <property type="evidence" value="ECO:0007669"/>
    <property type="project" value="UniProtKB-KW"/>
</dbReference>
<dbReference type="GO" id="GO:0006364">
    <property type="term" value="P:rRNA processing"/>
    <property type="evidence" value="ECO:0007669"/>
    <property type="project" value="InterPro"/>
</dbReference>
<dbReference type="GO" id="GO:0007283">
    <property type="term" value="P:spermatogenesis"/>
    <property type="evidence" value="ECO:0007669"/>
    <property type="project" value="UniProtKB-KW"/>
</dbReference>
<dbReference type="InterPro" id="IPR006709">
    <property type="entry name" value="SSU_processome_Utp14"/>
</dbReference>
<dbReference type="PANTHER" id="PTHR14150">
    <property type="entry name" value="U3 SMALL NUCLEOLAR RNA-ASSOCIATED PROTEIN 14"/>
    <property type="match status" value="1"/>
</dbReference>
<dbReference type="PANTHER" id="PTHR14150:SF16">
    <property type="entry name" value="U3 SMALL NUCLEOLAR RNA-ASSOCIATED PROTEIN 14 HOMOLOG C"/>
    <property type="match status" value="1"/>
</dbReference>
<dbReference type="Pfam" id="PF04615">
    <property type="entry name" value="Utp14"/>
    <property type="match status" value="1"/>
</dbReference>
<gene>
    <name type="primary">UTP14C</name>
    <name type="synonym">KIAA0266</name>
</gene>